<protein>
    <recommendedName>
        <fullName evidence="1">Valine--tRNA ligase</fullName>
        <ecNumber evidence="1">6.1.1.9</ecNumber>
    </recommendedName>
    <alternativeName>
        <fullName evidence="1">Valyl-tRNA synthetase</fullName>
        <shortName evidence="1">ValRS</shortName>
    </alternativeName>
</protein>
<keyword id="KW-0030">Aminoacyl-tRNA synthetase</keyword>
<keyword id="KW-0067">ATP-binding</keyword>
<keyword id="KW-0175">Coiled coil</keyword>
<keyword id="KW-0963">Cytoplasm</keyword>
<keyword id="KW-0436">Ligase</keyword>
<keyword id="KW-0547">Nucleotide-binding</keyword>
<keyword id="KW-0648">Protein biosynthesis</keyword>
<keyword id="KW-1185">Reference proteome</keyword>
<sequence>MEKTYDPKAIEKKWADYWEKRQLSKPTAQGSPYCIMLPPPNVTGTLHMGHGFQQTLMDTLIRYHRMKGERTLWQGGTDHAGIATQMVVEQQLAQEDLTREDLGRQAFIKRVWEWRERSGGKITHQMRRLGVSIDWSRERFSMDEGLSRATTEAFIRLHHEGLIYRGKRLVNWDPKLNTAISDLEVVTEEVEGHLWHIRYPLAEGSGHLIIATTRPETLLGDVAIAVHPQDERYQPFVGKKVRLPLTDRTIPVIADEAVDKEFGTGSLKITPGHDFNDYEIGQRHQLPLINILTSEGYLNENVPEPYRGLERFEARKKIIADLQRENLLEKTEPYRVPVPRGERSGVIIEPLLTDQWFIKMEALAKPAMEAVESGELKFIPKNWEKTYLQWLSNIQDWCISRQLWWGHRLPVWYDEEKNSYVGRSREEILKKYHLSPDVKLQQETDVLDTWFSASLWPFATLGWPEKTESFKTFYPTQVLVTGFDIIFFWVARMVMMGLKLTHKIPFHSVYIHGLIRDSQGRKMSKSKGNVIDPIDIIDGISLDALIEKRTHALLQPKMAKTIEKMTRKEFPNGIASFGTDALRFTFCALASRGRDINFDMGRIDGYRNFCNKIWNAARFVTMNTQEKDLNPEKPLSYSAADEWIRTRLQQTIKNAEEALSQYRFDLLAQTLYEFTWNEYCDWYVEFAKCILYDKQAKPAQLRGTRVALLEVLEILLRLLHPVMPFITEEIWQTVAPLAGKEGKSIMVEHWPQFNIHEMNYDAKVEIEWVKNVITAIRTLRAEIGISPAKRIPVIFGKGDEKDKKRIAKMKSYIKTLGKVSQLRFAKHDDCFSATATGIVERLEIHIPLAGVIDKQTEIARLKKEISKLQKEEEKSLKKLDNPNYLQRAPQEVVEKERLSLEKTQNALKKLQSQYASIESL</sequence>
<accession>Q83DD0</accession>
<dbReference type="EC" id="6.1.1.9" evidence="1"/>
<dbReference type="EMBL" id="AE016828">
    <property type="protein sequence ID" value="AAO90342.1"/>
    <property type="molecule type" value="Genomic_DNA"/>
</dbReference>
<dbReference type="RefSeq" id="NP_819828.1">
    <property type="nucleotide sequence ID" value="NC_002971.4"/>
</dbReference>
<dbReference type="RefSeq" id="WP_010957818.1">
    <property type="nucleotide sequence ID" value="NC_002971.4"/>
</dbReference>
<dbReference type="SMR" id="Q83DD0"/>
<dbReference type="STRING" id="227377.CBU_0808"/>
<dbReference type="DNASU" id="1208701"/>
<dbReference type="EnsemblBacteria" id="AAO90342">
    <property type="protein sequence ID" value="AAO90342"/>
    <property type="gene ID" value="CBU_0808"/>
</dbReference>
<dbReference type="GeneID" id="1208701"/>
<dbReference type="KEGG" id="cbu:CBU_0808"/>
<dbReference type="PATRIC" id="fig|227377.7.peg.793"/>
<dbReference type="eggNOG" id="COG0525">
    <property type="taxonomic scope" value="Bacteria"/>
</dbReference>
<dbReference type="HOGENOM" id="CLU_001493_0_2_6"/>
<dbReference type="OrthoDB" id="9810365at2"/>
<dbReference type="Proteomes" id="UP000002671">
    <property type="component" value="Chromosome"/>
</dbReference>
<dbReference type="GO" id="GO:0005829">
    <property type="term" value="C:cytosol"/>
    <property type="evidence" value="ECO:0000318"/>
    <property type="project" value="GO_Central"/>
</dbReference>
<dbReference type="GO" id="GO:0002161">
    <property type="term" value="F:aminoacyl-tRNA deacylase activity"/>
    <property type="evidence" value="ECO:0007669"/>
    <property type="project" value="InterPro"/>
</dbReference>
<dbReference type="GO" id="GO:0005524">
    <property type="term" value="F:ATP binding"/>
    <property type="evidence" value="ECO:0007669"/>
    <property type="project" value="UniProtKB-UniRule"/>
</dbReference>
<dbReference type="GO" id="GO:0004832">
    <property type="term" value="F:valine-tRNA ligase activity"/>
    <property type="evidence" value="ECO:0000318"/>
    <property type="project" value="GO_Central"/>
</dbReference>
<dbReference type="GO" id="GO:0006438">
    <property type="term" value="P:valyl-tRNA aminoacylation"/>
    <property type="evidence" value="ECO:0000318"/>
    <property type="project" value="GO_Central"/>
</dbReference>
<dbReference type="CDD" id="cd07962">
    <property type="entry name" value="Anticodon_Ia_Val"/>
    <property type="match status" value="1"/>
</dbReference>
<dbReference type="CDD" id="cd00817">
    <property type="entry name" value="ValRS_core"/>
    <property type="match status" value="1"/>
</dbReference>
<dbReference type="FunFam" id="1.10.287.380:FF:000001">
    <property type="entry name" value="Valine--tRNA ligase"/>
    <property type="match status" value="1"/>
</dbReference>
<dbReference type="FunFam" id="3.40.50.620:FF:000032">
    <property type="entry name" value="Valine--tRNA ligase"/>
    <property type="match status" value="1"/>
</dbReference>
<dbReference type="FunFam" id="3.40.50.620:FF:000073">
    <property type="entry name" value="Valine--tRNA ligase"/>
    <property type="match status" value="1"/>
</dbReference>
<dbReference type="FunFam" id="1.10.730.10:FF:000009">
    <property type="entry name" value="Valine--tRNA ligase, mitochondrial"/>
    <property type="match status" value="1"/>
</dbReference>
<dbReference type="FunFam" id="3.90.740.10:FF:000005">
    <property type="entry name" value="Valine--tRNA ligase, mitochondrial"/>
    <property type="match status" value="1"/>
</dbReference>
<dbReference type="Gene3D" id="3.40.50.620">
    <property type="entry name" value="HUPs"/>
    <property type="match status" value="2"/>
</dbReference>
<dbReference type="Gene3D" id="1.10.730.10">
    <property type="entry name" value="Isoleucyl-tRNA Synthetase, Domain 1"/>
    <property type="match status" value="1"/>
</dbReference>
<dbReference type="Gene3D" id="1.10.287.380">
    <property type="entry name" value="Valyl-tRNA synthetase, C-terminal domain"/>
    <property type="match status" value="1"/>
</dbReference>
<dbReference type="Gene3D" id="3.90.740.10">
    <property type="entry name" value="Valyl/Leucyl/Isoleucyl-tRNA synthetase, editing domain"/>
    <property type="match status" value="1"/>
</dbReference>
<dbReference type="HAMAP" id="MF_02004">
    <property type="entry name" value="Val_tRNA_synth_type1"/>
    <property type="match status" value="1"/>
</dbReference>
<dbReference type="InterPro" id="IPR001412">
    <property type="entry name" value="aa-tRNA-synth_I_CS"/>
</dbReference>
<dbReference type="InterPro" id="IPR002300">
    <property type="entry name" value="aa-tRNA-synth_Ia"/>
</dbReference>
<dbReference type="InterPro" id="IPR033705">
    <property type="entry name" value="Anticodon_Ia_Val"/>
</dbReference>
<dbReference type="InterPro" id="IPR013155">
    <property type="entry name" value="M/V/L/I-tRNA-synth_anticd-bd"/>
</dbReference>
<dbReference type="InterPro" id="IPR014729">
    <property type="entry name" value="Rossmann-like_a/b/a_fold"/>
</dbReference>
<dbReference type="InterPro" id="IPR010978">
    <property type="entry name" value="tRNA-bd_arm"/>
</dbReference>
<dbReference type="InterPro" id="IPR009080">
    <property type="entry name" value="tRNAsynth_Ia_anticodon-bd"/>
</dbReference>
<dbReference type="InterPro" id="IPR037118">
    <property type="entry name" value="Val-tRNA_synth_C_sf"/>
</dbReference>
<dbReference type="InterPro" id="IPR019499">
    <property type="entry name" value="Val-tRNA_synth_tRNA-bd"/>
</dbReference>
<dbReference type="InterPro" id="IPR009008">
    <property type="entry name" value="Val/Leu/Ile-tRNA-synth_edit"/>
</dbReference>
<dbReference type="InterPro" id="IPR002303">
    <property type="entry name" value="Valyl-tRNA_ligase"/>
</dbReference>
<dbReference type="NCBIfam" id="NF004349">
    <property type="entry name" value="PRK05729.1"/>
    <property type="match status" value="1"/>
</dbReference>
<dbReference type="NCBIfam" id="TIGR00422">
    <property type="entry name" value="valS"/>
    <property type="match status" value="1"/>
</dbReference>
<dbReference type="PANTHER" id="PTHR11946:SF93">
    <property type="entry name" value="VALINE--TRNA LIGASE, CHLOROPLASTIC_MITOCHONDRIAL 2"/>
    <property type="match status" value="1"/>
</dbReference>
<dbReference type="PANTHER" id="PTHR11946">
    <property type="entry name" value="VALYL-TRNA SYNTHETASES"/>
    <property type="match status" value="1"/>
</dbReference>
<dbReference type="Pfam" id="PF08264">
    <property type="entry name" value="Anticodon_1"/>
    <property type="match status" value="1"/>
</dbReference>
<dbReference type="Pfam" id="PF00133">
    <property type="entry name" value="tRNA-synt_1"/>
    <property type="match status" value="1"/>
</dbReference>
<dbReference type="Pfam" id="PF10458">
    <property type="entry name" value="Val_tRNA-synt_C"/>
    <property type="match status" value="1"/>
</dbReference>
<dbReference type="PRINTS" id="PR00986">
    <property type="entry name" value="TRNASYNTHVAL"/>
</dbReference>
<dbReference type="SUPFAM" id="SSF47323">
    <property type="entry name" value="Anticodon-binding domain of a subclass of class I aminoacyl-tRNA synthetases"/>
    <property type="match status" value="1"/>
</dbReference>
<dbReference type="SUPFAM" id="SSF52374">
    <property type="entry name" value="Nucleotidylyl transferase"/>
    <property type="match status" value="1"/>
</dbReference>
<dbReference type="SUPFAM" id="SSF46589">
    <property type="entry name" value="tRNA-binding arm"/>
    <property type="match status" value="1"/>
</dbReference>
<dbReference type="SUPFAM" id="SSF50677">
    <property type="entry name" value="ValRS/IleRS/LeuRS editing domain"/>
    <property type="match status" value="1"/>
</dbReference>
<dbReference type="PROSITE" id="PS00178">
    <property type="entry name" value="AA_TRNA_LIGASE_I"/>
    <property type="match status" value="1"/>
</dbReference>
<comment type="function">
    <text evidence="1">Catalyzes the attachment of valine to tRNA(Val). As ValRS can inadvertently accommodate and process structurally similar amino acids such as threonine, to avoid such errors, it has a 'posttransfer' editing activity that hydrolyzes mischarged Thr-tRNA(Val) in a tRNA-dependent manner.</text>
</comment>
<comment type="catalytic activity">
    <reaction evidence="1">
        <text>tRNA(Val) + L-valine + ATP = L-valyl-tRNA(Val) + AMP + diphosphate</text>
        <dbReference type="Rhea" id="RHEA:10704"/>
        <dbReference type="Rhea" id="RHEA-COMP:9672"/>
        <dbReference type="Rhea" id="RHEA-COMP:9708"/>
        <dbReference type="ChEBI" id="CHEBI:30616"/>
        <dbReference type="ChEBI" id="CHEBI:33019"/>
        <dbReference type="ChEBI" id="CHEBI:57762"/>
        <dbReference type="ChEBI" id="CHEBI:78442"/>
        <dbReference type="ChEBI" id="CHEBI:78537"/>
        <dbReference type="ChEBI" id="CHEBI:456215"/>
        <dbReference type="EC" id="6.1.1.9"/>
    </reaction>
</comment>
<comment type="subunit">
    <text evidence="1">Monomer.</text>
</comment>
<comment type="subcellular location">
    <subcellularLocation>
        <location evidence="1">Cytoplasm</location>
    </subcellularLocation>
</comment>
<comment type="domain">
    <text evidence="1">ValRS has two distinct active sites: one for aminoacylation and one for editing. The misactivated threonine is translocated from the active site to the editing site.</text>
</comment>
<comment type="domain">
    <text evidence="1">The C-terminal coiled-coil domain is crucial for aminoacylation activity.</text>
</comment>
<comment type="similarity">
    <text evidence="1">Belongs to the class-I aminoacyl-tRNA synthetase family. ValS type 1 subfamily.</text>
</comment>
<reference key="1">
    <citation type="journal article" date="2003" name="Proc. Natl. Acad. Sci. U.S.A.">
        <title>Complete genome sequence of the Q-fever pathogen, Coxiella burnetii.</title>
        <authorList>
            <person name="Seshadri R."/>
            <person name="Paulsen I.T."/>
            <person name="Eisen J.A."/>
            <person name="Read T.D."/>
            <person name="Nelson K.E."/>
            <person name="Nelson W.C."/>
            <person name="Ward N.L."/>
            <person name="Tettelin H."/>
            <person name="Davidsen T.M."/>
            <person name="Beanan M.J."/>
            <person name="DeBoy R.T."/>
            <person name="Daugherty S.C."/>
            <person name="Brinkac L.M."/>
            <person name="Madupu R."/>
            <person name="Dodson R.J."/>
            <person name="Khouri H.M."/>
            <person name="Lee K.H."/>
            <person name="Carty H.A."/>
            <person name="Scanlan D."/>
            <person name="Heinzen R.A."/>
            <person name="Thompson H.A."/>
            <person name="Samuel J.E."/>
            <person name="Fraser C.M."/>
            <person name="Heidelberg J.F."/>
        </authorList>
    </citation>
    <scope>NUCLEOTIDE SEQUENCE [LARGE SCALE GENOMIC DNA]</scope>
    <source>
        <strain>RSA 493 / Nine Mile phase I</strain>
    </source>
</reference>
<gene>
    <name evidence="1" type="primary">valS</name>
    <name type="ordered locus">CBU_0808</name>
</gene>
<proteinExistence type="inferred from homology"/>
<organism>
    <name type="scientific">Coxiella burnetii (strain RSA 493 / Nine Mile phase I)</name>
    <dbReference type="NCBI Taxonomy" id="227377"/>
    <lineage>
        <taxon>Bacteria</taxon>
        <taxon>Pseudomonadati</taxon>
        <taxon>Pseudomonadota</taxon>
        <taxon>Gammaproteobacteria</taxon>
        <taxon>Legionellales</taxon>
        <taxon>Coxiellaceae</taxon>
        <taxon>Coxiella</taxon>
    </lineage>
</organism>
<evidence type="ECO:0000255" key="1">
    <source>
        <dbReference type="HAMAP-Rule" id="MF_02004"/>
    </source>
</evidence>
<name>SYV_COXBU</name>
<feature type="chain" id="PRO_0000224469" description="Valine--tRNA ligase">
    <location>
        <begin position="1"/>
        <end position="920"/>
    </location>
</feature>
<feature type="coiled-coil region" evidence="1">
    <location>
        <begin position="642"/>
        <end position="668"/>
    </location>
</feature>
<feature type="coiled-coil region" evidence="1">
    <location>
        <begin position="849"/>
        <end position="920"/>
    </location>
</feature>
<feature type="short sequence motif" description="'HIGH' region">
    <location>
        <begin position="40"/>
        <end position="50"/>
    </location>
</feature>
<feature type="short sequence motif" description="'KMSKS' region">
    <location>
        <begin position="522"/>
        <end position="526"/>
    </location>
</feature>
<feature type="binding site" evidence="1">
    <location>
        <position position="525"/>
    </location>
    <ligand>
        <name>ATP</name>
        <dbReference type="ChEBI" id="CHEBI:30616"/>
    </ligand>
</feature>